<dbReference type="EC" id="6.3.1.21" evidence="1"/>
<dbReference type="EMBL" id="CP000148">
    <property type="protein sequence ID" value="ABB33406.1"/>
    <property type="molecule type" value="Genomic_DNA"/>
</dbReference>
<dbReference type="RefSeq" id="WP_004512631.1">
    <property type="nucleotide sequence ID" value="NC_007517.1"/>
</dbReference>
<dbReference type="SMR" id="Q39QR8"/>
<dbReference type="STRING" id="269799.Gmet_3193"/>
<dbReference type="KEGG" id="gme:Gmet_3193"/>
<dbReference type="eggNOG" id="COG0027">
    <property type="taxonomic scope" value="Bacteria"/>
</dbReference>
<dbReference type="HOGENOM" id="CLU_011534_1_3_7"/>
<dbReference type="UniPathway" id="UPA00074">
    <property type="reaction ID" value="UER00127"/>
</dbReference>
<dbReference type="Proteomes" id="UP000007073">
    <property type="component" value="Chromosome"/>
</dbReference>
<dbReference type="GO" id="GO:0005829">
    <property type="term" value="C:cytosol"/>
    <property type="evidence" value="ECO:0007669"/>
    <property type="project" value="TreeGrafter"/>
</dbReference>
<dbReference type="GO" id="GO:0005524">
    <property type="term" value="F:ATP binding"/>
    <property type="evidence" value="ECO:0007669"/>
    <property type="project" value="UniProtKB-UniRule"/>
</dbReference>
<dbReference type="GO" id="GO:0000287">
    <property type="term" value="F:magnesium ion binding"/>
    <property type="evidence" value="ECO:0007669"/>
    <property type="project" value="InterPro"/>
</dbReference>
<dbReference type="GO" id="GO:0043815">
    <property type="term" value="F:phosphoribosylglycinamide formyltransferase 2 activity"/>
    <property type="evidence" value="ECO:0007669"/>
    <property type="project" value="UniProtKB-UniRule"/>
</dbReference>
<dbReference type="GO" id="GO:0004644">
    <property type="term" value="F:phosphoribosylglycinamide formyltransferase activity"/>
    <property type="evidence" value="ECO:0007669"/>
    <property type="project" value="InterPro"/>
</dbReference>
<dbReference type="GO" id="GO:0006189">
    <property type="term" value="P:'de novo' IMP biosynthetic process"/>
    <property type="evidence" value="ECO:0007669"/>
    <property type="project" value="UniProtKB-UniRule"/>
</dbReference>
<dbReference type="FunFam" id="3.30.1490.20:FF:000013">
    <property type="entry name" value="Formate-dependent phosphoribosylglycinamide formyltransferase"/>
    <property type="match status" value="1"/>
</dbReference>
<dbReference type="FunFam" id="3.40.50.20:FF:000007">
    <property type="entry name" value="Formate-dependent phosphoribosylglycinamide formyltransferase"/>
    <property type="match status" value="1"/>
</dbReference>
<dbReference type="Gene3D" id="3.40.50.20">
    <property type="match status" value="1"/>
</dbReference>
<dbReference type="Gene3D" id="3.30.1490.20">
    <property type="entry name" value="ATP-grasp fold, A domain"/>
    <property type="match status" value="1"/>
</dbReference>
<dbReference type="Gene3D" id="3.30.470.20">
    <property type="entry name" value="ATP-grasp fold, B domain"/>
    <property type="match status" value="1"/>
</dbReference>
<dbReference type="HAMAP" id="MF_01643">
    <property type="entry name" value="PurT"/>
    <property type="match status" value="1"/>
</dbReference>
<dbReference type="InterPro" id="IPR011761">
    <property type="entry name" value="ATP-grasp"/>
</dbReference>
<dbReference type="InterPro" id="IPR003135">
    <property type="entry name" value="ATP-grasp_carboxylate-amine"/>
</dbReference>
<dbReference type="InterPro" id="IPR013815">
    <property type="entry name" value="ATP_grasp_subdomain_1"/>
</dbReference>
<dbReference type="InterPro" id="IPR016185">
    <property type="entry name" value="PreATP-grasp_dom_sf"/>
</dbReference>
<dbReference type="InterPro" id="IPR005862">
    <property type="entry name" value="PurT"/>
</dbReference>
<dbReference type="InterPro" id="IPR054350">
    <property type="entry name" value="PurT/PurK_preATP-grasp"/>
</dbReference>
<dbReference type="InterPro" id="IPR048740">
    <property type="entry name" value="PurT_C"/>
</dbReference>
<dbReference type="NCBIfam" id="NF006766">
    <property type="entry name" value="PRK09288.1"/>
    <property type="match status" value="1"/>
</dbReference>
<dbReference type="NCBIfam" id="TIGR01142">
    <property type="entry name" value="purT"/>
    <property type="match status" value="1"/>
</dbReference>
<dbReference type="PANTHER" id="PTHR43055">
    <property type="entry name" value="FORMATE-DEPENDENT PHOSPHORIBOSYLGLYCINAMIDE FORMYLTRANSFERASE"/>
    <property type="match status" value="1"/>
</dbReference>
<dbReference type="PANTHER" id="PTHR43055:SF1">
    <property type="entry name" value="FORMATE-DEPENDENT PHOSPHORIBOSYLGLYCINAMIDE FORMYLTRANSFERASE"/>
    <property type="match status" value="1"/>
</dbReference>
<dbReference type="Pfam" id="PF02222">
    <property type="entry name" value="ATP-grasp"/>
    <property type="match status" value="1"/>
</dbReference>
<dbReference type="Pfam" id="PF21244">
    <property type="entry name" value="PurT_C"/>
    <property type="match status" value="1"/>
</dbReference>
<dbReference type="Pfam" id="PF22660">
    <property type="entry name" value="RS_preATP-grasp-like"/>
    <property type="match status" value="1"/>
</dbReference>
<dbReference type="SUPFAM" id="SSF56059">
    <property type="entry name" value="Glutathione synthetase ATP-binding domain-like"/>
    <property type="match status" value="1"/>
</dbReference>
<dbReference type="SUPFAM" id="SSF52440">
    <property type="entry name" value="PreATP-grasp domain"/>
    <property type="match status" value="1"/>
</dbReference>
<dbReference type="PROSITE" id="PS50975">
    <property type="entry name" value="ATP_GRASP"/>
    <property type="match status" value="1"/>
</dbReference>
<keyword id="KW-0067">ATP-binding</keyword>
<keyword id="KW-0436">Ligase</keyword>
<keyword id="KW-0460">Magnesium</keyword>
<keyword id="KW-0479">Metal-binding</keyword>
<keyword id="KW-0547">Nucleotide-binding</keyword>
<keyword id="KW-0658">Purine biosynthesis</keyword>
<keyword id="KW-1185">Reference proteome</keyword>
<organism>
    <name type="scientific">Geobacter metallireducens (strain ATCC 53774 / DSM 7210 / GS-15)</name>
    <dbReference type="NCBI Taxonomy" id="269799"/>
    <lineage>
        <taxon>Bacteria</taxon>
        <taxon>Pseudomonadati</taxon>
        <taxon>Thermodesulfobacteriota</taxon>
        <taxon>Desulfuromonadia</taxon>
        <taxon>Geobacterales</taxon>
        <taxon>Geobacteraceae</taxon>
        <taxon>Geobacter</taxon>
    </lineage>
</organism>
<gene>
    <name evidence="1" type="primary">purT</name>
    <name type="ordered locus">Gmet_3193</name>
</gene>
<sequence>MIGTPLKKSATRVMLLGSGELGKEVVLEAQRLGVEVIAVDRYADAPAMQVAHRAHVVNMLDRVELGRIVARERPHLIVPEIEAIDTPYLLELEQEGYTVIPTARAANLTMNREGIRRLAAEELGLPTAAYRFAASIESFRAAVKDIGLPCVVKPIMSSSGKGQSVVKSMEEIDGAWTYAMEGGRGASDTVIVEEFIPFDYEITLLTVRHAGGTTFCPPIGHVQIKGDYHESWQPMAMTPAALAESQRQAKAVTDALGGSGIFGVELFIKGDRVWFSEVSPRPHDTGMVTMISQNLSEFELHVRAILGLPVPEVANLAPAASHVVLASEAAEEVTFSGLDAALSVPETKLRLFGKPDTRPGRRMGVALSFGADTDEARNRAEQAAHAVKIVTL</sequence>
<comment type="function">
    <text evidence="1">Involved in the de novo purine biosynthesis. Catalyzes the transfer of formate to 5-phospho-ribosyl-glycinamide (GAR), producing 5-phospho-ribosyl-N-formylglycinamide (FGAR). Formate is provided by PurU via hydrolysis of 10-formyl-tetrahydrofolate.</text>
</comment>
<comment type="catalytic activity">
    <reaction evidence="1">
        <text>N(1)-(5-phospho-beta-D-ribosyl)glycinamide + formate + ATP = N(2)-formyl-N(1)-(5-phospho-beta-D-ribosyl)glycinamide + ADP + phosphate + H(+)</text>
        <dbReference type="Rhea" id="RHEA:24829"/>
        <dbReference type="ChEBI" id="CHEBI:15378"/>
        <dbReference type="ChEBI" id="CHEBI:15740"/>
        <dbReference type="ChEBI" id="CHEBI:30616"/>
        <dbReference type="ChEBI" id="CHEBI:43474"/>
        <dbReference type="ChEBI" id="CHEBI:143788"/>
        <dbReference type="ChEBI" id="CHEBI:147286"/>
        <dbReference type="ChEBI" id="CHEBI:456216"/>
        <dbReference type="EC" id="6.3.1.21"/>
    </reaction>
    <physiologicalReaction direction="left-to-right" evidence="1">
        <dbReference type="Rhea" id="RHEA:24830"/>
    </physiologicalReaction>
</comment>
<comment type="pathway">
    <text evidence="1">Purine metabolism; IMP biosynthesis via de novo pathway; N(2)-formyl-N(1)-(5-phospho-D-ribosyl)glycinamide from N(1)-(5-phospho-D-ribosyl)glycinamide (formate route): step 1/1.</text>
</comment>
<comment type="subunit">
    <text evidence="1">Homodimer.</text>
</comment>
<comment type="similarity">
    <text evidence="1">Belongs to the PurK/PurT family.</text>
</comment>
<accession>Q39QR8</accession>
<evidence type="ECO:0000255" key="1">
    <source>
        <dbReference type="HAMAP-Rule" id="MF_01643"/>
    </source>
</evidence>
<name>PURT_GEOMG</name>
<protein>
    <recommendedName>
        <fullName evidence="1">Formate-dependent phosphoribosylglycinamide formyltransferase</fullName>
        <ecNumber evidence="1">6.3.1.21</ecNumber>
    </recommendedName>
    <alternativeName>
        <fullName evidence="1">5'-phosphoribosylglycinamide transformylase 2</fullName>
    </alternativeName>
    <alternativeName>
        <fullName evidence="1">Formate-dependent GAR transformylase</fullName>
    </alternativeName>
    <alternativeName>
        <fullName evidence="1">GAR transformylase 2</fullName>
        <shortName evidence="1">GART 2</shortName>
    </alternativeName>
    <alternativeName>
        <fullName evidence="1">Non-folate glycinamide ribonucleotide transformylase</fullName>
    </alternativeName>
    <alternativeName>
        <fullName evidence="1">Phosphoribosylglycinamide formyltransferase 2</fullName>
    </alternativeName>
</protein>
<proteinExistence type="inferred from homology"/>
<reference key="1">
    <citation type="journal article" date="2009" name="BMC Microbiol.">
        <title>The genome sequence of Geobacter metallireducens: features of metabolism, physiology and regulation common and dissimilar to Geobacter sulfurreducens.</title>
        <authorList>
            <person name="Aklujkar M."/>
            <person name="Krushkal J."/>
            <person name="DiBartolo G."/>
            <person name="Lapidus A."/>
            <person name="Land M.L."/>
            <person name="Lovley D.R."/>
        </authorList>
    </citation>
    <scope>NUCLEOTIDE SEQUENCE [LARGE SCALE GENOMIC DNA]</scope>
    <source>
        <strain>ATCC 53774 / DSM 7210 / GS-15</strain>
    </source>
</reference>
<feature type="chain" id="PRO_0000319174" description="Formate-dependent phosphoribosylglycinamide formyltransferase">
    <location>
        <begin position="1"/>
        <end position="392"/>
    </location>
</feature>
<feature type="domain" description="ATP-grasp" evidence="1">
    <location>
        <begin position="117"/>
        <end position="306"/>
    </location>
</feature>
<feature type="binding site" evidence="1">
    <location>
        <begin position="20"/>
        <end position="21"/>
    </location>
    <ligand>
        <name>N(1)-(5-phospho-beta-D-ribosyl)glycinamide</name>
        <dbReference type="ChEBI" id="CHEBI:143788"/>
    </ligand>
</feature>
<feature type="binding site" evidence="1">
    <location>
        <position position="80"/>
    </location>
    <ligand>
        <name>N(1)-(5-phospho-beta-D-ribosyl)glycinamide</name>
        <dbReference type="ChEBI" id="CHEBI:143788"/>
    </ligand>
</feature>
<feature type="binding site" evidence="1">
    <location>
        <position position="112"/>
    </location>
    <ligand>
        <name>ATP</name>
        <dbReference type="ChEBI" id="CHEBI:30616"/>
    </ligand>
</feature>
<feature type="binding site" evidence="1">
    <location>
        <position position="153"/>
    </location>
    <ligand>
        <name>ATP</name>
        <dbReference type="ChEBI" id="CHEBI:30616"/>
    </ligand>
</feature>
<feature type="binding site" evidence="1">
    <location>
        <begin position="158"/>
        <end position="163"/>
    </location>
    <ligand>
        <name>ATP</name>
        <dbReference type="ChEBI" id="CHEBI:30616"/>
    </ligand>
</feature>
<feature type="binding site" evidence="1">
    <location>
        <begin position="193"/>
        <end position="196"/>
    </location>
    <ligand>
        <name>ATP</name>
        <dbReference type="ChEBI" id="CHEBI:30616"/>
    </ligand>
</feature>
<feature type="binding site" evidence="1">
    <location>
        <position position="201"/>
    </location>
    <ligand>
        <name>ATP</name>
        <dbReference type="ChEBI" id="CHEBI:30616"/>
    </ligand>
</feature>
<feature type="binding site" evidence="1">
    <location>
        <position position="265"/>
    </location>
    <ligand>
        <name>Mg(2+)</name>
        <dbReference type="ChEBI" id="CHEBI:18420"/>
    </ligand>
</feature>
<feature type="binding site" evidence="1">
    <location>
        <position position="277"/>
    </location>
    <ligand>
        <name>Mg(2+)</name>
        <dbReference type="ChEBI" id="CHEBI:18420"/>
    </ligand>
</feature>
<feature type="binding site" evidence="1">
    <location>
        <position position="284"/>
    </location>
    <ligand>
        <name>N(1)-(5-phospho-beta-D-ribosyl)glycinamide</name>
        <dbReference type="ChEBI" id="CHEBI:143788"/>
    </ligand>
</feature>
<feature type="binding site" evidence="1">
    <location>
        <position position="354"/>
    </location>
    <ligand>
        <name>N(1)-(5-phospho-beta-D-ribosyl)glycinamide</name>
        <dbReference type="ChEBI" id="CHEBI:143788"/>
    </ligand>
</feature>
<feature type="binding site" evidence="1">
    <location>
        <begin position="361"/>
        <end position="362"/>
    </location>
    <ligand>
        <name>N(1)-(5-phospho-beta-D-ribosyl)glycinamide</name>
        <dbReference type="ChEBI" id="CHEBI:143788"/>
    </ligand>
</feature>